<reference key="1">
    <citation type="journal article" date="2001" name="Mol. Biol. Evol.">
        <title>Mechanisms for evolving hypervariability: the case of conopeptides.</title>
        <authorList>
            <person name="Conticello S.G."/>
            <person name="Gilad Y."/>
            <person name="Avidan N."/>
            <person name="Ben-Asher E."/>
            <person name="Levy Z."/>
            <person name="Fainzilber M."/>
        </authorList>
    </citation>
    <scope>NUCLEOTIDE SEQUENCE [MRNA]</scope>
    <source>
        <tissue>Venom duct</tissue>
    </source>
</reference>
<protein>
    <recommendedName>
        <fullName evidence="5">Conotoxin TsMLCL-04</fullName>
    </recommendedName>
</protein>
<name>CT54_CONTS</name>
<organism>
    <name type="scientific">Conus tessulatus</name>
    <name type="common">Tessellate cone</name>
    <dbReference type="NCBI Taxonomy" id="101317"/>
    <lineage>
        <taxon>Eukaryota</taxon>
        <taxon>Metazoa</taxon>
        <taxon>Spiralia</taxon>
        <taxon>Lophotrochozoa</taxon>
        <taxon>Mollusca</taxon>
        <taxon>Gastropoda</taxon>
        <taxon>Caenogastropoda</taxon>
        <taxon>Neogastropoda</taxon>
        <taxon>Conoidea</taxon>
        <taxon>Conidae</taxon>
        <taxon>Conus</taxon>
        <taxon>Tesselliconus</taxon>
    </lineage>
</organism>
<feature type="signal peptide" evidence="2">
    <location>
        <begin position="1"/>
        <end position="19"/>
    </location>
</feature>
<feature type="propeptide" id="PRO_0000404960" evidence="1">
    <location>
        <begin position="20"/>
        <end position="60"/>
    </location>
</feature>
<feature type="peptide" id="PRO_0000404961" description="Conotoxin TsMLCL-04">
    <location>
        <begin position="61"/>
        <end position="74"/>
    </location>
</feature>
<sequence>MLCLPVFIILLLLASPAAPNPLETRIQRDLIRAALEDADMKTNERFLEGVISTIKDFAGKVCCSVSVNFCCPTA</sequence>
<keyword id="KW-1015">Disulfide bond</keyword>
<keyword id="KW-0528">Neurotoxin</keyword>
<keyword id="KW-0964">Secreted</keyword>
<keyword id="KW-0732">Signal</keyword>
<keyword id="KW-0800">Toxin</keyword>
<accession>Q9BPD9</accession>
<proteinExistence type="inferred from homology"/>
<dbReference type="EMBL" id="AF214995">
    <property type="protein sequence ID" value="AAG60423.1"/>
    <property type="molecule type" value="mRNA"/>
</dbReference>
<dbReference type="ConoServer" id="682">
    <property type="toxin name" value="Ts5.4 precursor"/>
</dbReference>
<dbReference type="GO" id="GO:0005576">
    <property type="term" value="C:extracellular region"/>
    <property type="evidence" value="ECO:0007669"/>
    <property type="project" value="UniProtKB-SubCell"/>
</dbReference>
<dbReference type="GO" id="GO:0008200">
    <property type="term" value="F:ion channel inhibitor activity"/>
    <property type="evidence" value="ECO:0007669"/>
    <property type="project" value="InterPro"/>
</dbReference>
<dbReference type="GO" id="GO:0090729">
    <property type="term" value="F:toxin activity"/>
    <property type="evidence" value="ECO:0007669"/>
    <property type="project" value="UniProtKB-KW"/>
</dbReference>
<dbReference type="InterPro" id="IPR004214">
    <property type="entry name" value="Conotoxin"/>
</dbReference>
<dbReference type="Pfam" id="PF02950">
    <property type="entry name" value="Conotoxin"/>
    <property type="match status" value="1"/>
</dbReference>
<comment type="subcellular location">
    <subcellularLocation>
        <location evidence="4">Secreted</location>
    </subcellularLocation>
</comment>
<comment type="tissue specificity">
    <text evidence="4">Expressed by the venom duct.</text>
</comment>
<comment type="domain">
    <text evidence="3">The cysteine framework is V (CC-CC).</text>
</comment>
<comment type="PTM">
    <text evidence="3">Contains 2 disulfide bonds that can be either 'C1-C3, C2-C4' or 'C1-C4, C2-C3', since these disulfide connectivities have been observed for conotoxins with cysteine framework V (for examples, see AC P0DQQ7 and AC P81755).</text>
</comment>
<comment type="similarity">
    <text evidence="3">Belongs to the conotoxin T superfamily.</text>
</comment>
<evidence type="ECO:0000250" key="1"/>
<evidence type="ECO:0000255" key="2"/>
<evidence type="ECO:0000305" key="3"/>
<evidence type="ECO:0000305" key="4">
    <source>
    </source>
</evidence>
<evidence type="ECO:0000312" key="5">
    <source>
        <dbReference type="EMBL" id="AAG60423.1"/>
    </source>
</evidence>